<evidence type="ECO:0000255" key="1">
    <source>
        <dbReference type="HAMAP-Rule" id="MF_00181"/>
    </source>
</evidence>
<evidence type="ECO:0007829" key="2">
    <source>
        <dbReference type="PDB" id="8PZM"/>
    </source>
</evidence>
<feature type="chain" id="PRO_1000019955" description="Probable cytosol aminopeptidase">
    <location>
        <begin position="1"/>
        <end position="495"/>
    </location>
</feature>
<feature type="active site" evidence="1">
    <location>
        <position position="278"/>
    </location>
</feature>
<feature type="active site" evidence="1">
    <location>
        <position position="352"/>
    </location>
</feature>
<feature type="binding site" evidence="1">
    <location>
        <position position="266"/>
    </location>
    <ligand>
        <name>Mn(2+)</name>
        <dbReference type="ChEBI" id="CHEBI:29035"/>
        <label>2</label>
    </ligand>
</feature>
<feature type="binding site" evidence="1">
    <location>
        <position position="271"/>
    </location>
    <ligand>
        <name>Mn(2+)</name>
        <dbReference type="ChEBI" id="CHEBI:29035"/>
        <label>1</label>
    </ligand>
</feature>
<feature type="binding site" evidence="1">
    <location>
        <position position="271"/>
    </location>
    <ligand>
        <name>Mn(2+)</name>
        <dbReference type="ChEBI" id="CHEBI:29035"/>
        <label>2</label>
    </ligand>
</feature>
<feature type="binding site" evidence="1">
    <location>
        <position position="289"/>
    </location>
    <ligand>
        <name>Mn(2+)</name>
        <dbReference type="ChEBI" id="CHEBI:29035"/>
        <label>2</label>
    </ligand>
</feature>
<feature type="binding site" evidence="1">
    <location>
        <position position="348"/>
    </location>
    <ligand>
        <name>Mn(2+)</name>
        <dbReference type="ChEBI" id="CHEBI:29035"/>
        <label>1</label>
    </ligand>
</feature>
<feature type="binding site" evidence="1">
    <location>
        <position position="350"/>
    </location>
    <ligand>
        <name>Mn(2+)</name>
        <dbReference type="ChEBI" id="CHEBI:29035"/>
        <label>1</label>
    </ligand>
</feature>
<feature type="binding site" evidence="1">
    <location>
        <position position="350"/>
    </location>
    <ligand>
        <name>Mn(2+)</name>
        <dbReference type="ChEBI" id="CHEBI:29035"/>
        <label>2</label>
    </ligand>
</feature>
<feature type="strand" evidence="2">
    <location>
        <begin position="2"/>
        <end position="6"/>
    </location>
</feature>
<feature type="helix" evidence="2">
    <location>
        <begin position="10"/>
        <end position="12"/>
    </location>
</feature>
<feature type="strand" evidence="2">
    <location>
        <begin position="15"/>
        <end position="23"/>
    </location>
</feature>
<feature type="turn" evidence="2">
    <location>
        <begin position="24"/>
        <end position="26"/>
    </location>
</feature>
<feature type="helix" evidence="2">
    <location>
        <begin position="30"/>
        <end position="38"/>
    </location>
</feature>
<feature type="helix" evidence="2">
    <location>
        <begin position="42"/>
        <end position="48"/>
    </location>
</feature>
<feature type="strand" evidence="2">
    <location>
        <begin position="59"/>
        <end position="62"/>
    </location>
</feature>
<feature type="strand" evidence="2">
    <location>
        <begin position="69"/>
        <end position="77"/>
    </location>
</feature>
<feature type="strand" evidence="2">
    <location>
        <begin position="80"/>
        <end position="84"/>
    </location>
</feature>
<feature type="helix" evidence="2">
    <location>
        <begin position="86"/>
        <end position="102"/>
    </location>
</feature>
<feature type="strand" evidence="2">
    <location>
        <begin position="106"/>
        <end position="111"/>
    </location>
</feature>
<feature type="helix" evidence="2">
    <location>
        <begin position="122"/>
        <end position="136"/>
    </location>
</feature>
<feature type="strand" evidence="2">
    <location>
        <begin position="155"/>
        <end position="159"/>
    </location>
</feature>
<feature type="helix" evidence="2">
    <location>
        <begin position="162"/>
        <end position="190"/>
    </location>
</feature>
<feature type="turn" evidence="2">
    <location>
        <begin position="193"/>
        <end position="195"/>
    </location>
</feature>
<feature type="helix" evidence="2">
    <location>
        <begin position="198"/>
        <end position="211"/>
    </location>
</feature>
<feature type="strand" evidence="2">
    <location>
        <begin position="215"/>
        <end position="220"/>
    </location>
</feature>
<feature type="helix" evidence="2">
    <location>
        <begin position="222"/>
        <end position="228"/>
    </location>
</feature>
<feature type="helix" evidence="2">
    <location>
        <begin position="231"/>
        <end position="237"/>
    </location>
</feature>
<feature type="strand" evidence="2">
    <location>
        <begin position="240"/>
        <end position="242"/>
    </location>
</feature>
<feature type="strand" evidence="2">
    <location>
        <begin position="245"/>
        <end position="252"/>
    </location>
</feature>
<feature type="strand" evidence="2">
    <location>
        <begin position="261"/>
        <end position="271"/>
    </location>
</feature>
<feature type="helix" evidence="2">
    <location>
        <begin position="283"/>
        <end position="288"/>
    </location>
</feature>
<feature type="helix" evidence="2">
    <location>
        <begin position="291"/>
        <end position="306"/>
    </location>
</feature>
<feature type="strand" evidence="2">
    <location>
        <begin position="309"/>
        <end position="321"/>
    </location>
</feature>
<feature type="strand" evidence="2">
    <location>
        <begin position="332"/>
        <end position="335"/>
    </location>
</feature>
<feature type="strand" evidence="2">
    <location>
        <begin position="341"/>
        <end position="345"/>
    </location>
</feature>
<feature type="helix" evidence="2">
    <location>
        <begin position="351"/>
        <end position="362"/>
    </location>
</feature>
<feature type="helix" evidence="2">
    <location>
        <begin position="363"/>
        <end position="365"/>
    </location>
</feature>
<feature type="strand" evidence="2">
    <location>
        <begin position="368"/>
        <end position="374"/>
    </location>
</feature>
<feature type="helix" evidence="2">
    <location>
        <begin position="378"/>
        <end position="384"/>
    </location>
</feature>
<feature type="turn" evidence="2">
    <location>
        <begin position="385"/>
        <end position="387"/>
    </location>
</feature>
<feature type="strand" evidence="2">
    <location>
        <begin position="388"/>
        <end position="394"/>
    </location>
</feature>
<feature type="helix" evidence="2">
    <location>
        <begin position="396"/>
        <end position="409"/>
    </location>
</feature>
<feature type="strand" evidence="2">
    <location>
        <begin position="413"/>
        <end position="415"/>
    </location>
</feature>
<feature type="helix" evidence="2">
    <location>
        <begin position="420"/>
        <end position="426"/>
    </location>
</feature>
<feature type="strand" evidence="2">
    <location>
        <begin position="429"/>
        <end position="435"/>
    </location>
</feature>
<feature type="strand" evidence="2">
    <location>
        <begin position="439"/>
        <end position="441"/>
    </location>
</feature>
<feature type="helix" evidence="2">
    <location>
        <begin position="442"/>
        <end position="451"/>
    </location>
</feature>
<feature type="strand" evidence="2">
    <location>
        <begin position="459"/>
        <end position="463"/>
    </location>
</feature>
<feature type="turn" evidence="2">
    <location>
        <begin position="465"/>
        <end position="467"/>
    </location>
</feature>
<feature type="strand" evidence="2">
    <location>
        <begin position="468"/>
        <end position="470"/>
    </location>
</feature>
<feature type="helix" evidence="2">
    <location>
        <begin position="483"/>
        <end position="493"/>
    </location>
</feature>
<keyword id="KW-0002">3D-structure</keyword>
<keyword id="KW-0031">Aminopeptidase</keyword>
<keyword id="KW-0963">Cytoplasm</keyword>
<keyword id="KW-0378">Hydrolase</keyword>
<keyword id="KW-0464">Manganese</keyword>
<keyword id="KW-0479">Metal-binding</keyword>
<keyword id="KW-0645">Protease</keyword>
<proteinExistence type="evidence at protein level"/>
<gene>
    <name evidence="1" type="primary">pepA</name>
    <name type="ordered locus">PA14_14470</name>
</gene>
<sequence>MEFLVKSVRPETLKTATLVLAVGEGRKLGASAKAVDDATGGAISAVLKRGDLAGKVGQTLLLQSLPNLKAERVLLVGAGKERELGDRQYRKLASAVLSTLKGLAGADAALALGDLAVKGRGAHAKARLLVETLADGLYVFDRYKSQKAEPLKLKKLTLLADKADSAAVEQGSKEAQAIANGMALTRDLGNLPPNVCHPTFLGEQAKGLAKEFKSLKVEVLDEKKLRELGMGSFLAVAQGSDQPPRLIILQYNGAKKDQAPHVLVGKGITFDTGGISLKPGLGMDEMKFDMCGAASVFGTFRAVLELQLPINLVGLLACAENMPSGGATRPGDIVTTMSGQTVEILNTDAEGRLVLCDALTYAERFKPQSVIDIATLTGACIVALGSNTSGLMGNNEALVRQLLKAGEFADDRAWQLPLFDEYQEQLDSPFADIANIGGPKAGTITAGCFLSRFAKKYHWAHLDIAGTAWISGGKDKGATGRPVPLLTQYLLERAK</sequence>
<reference key="1">
    <citation type="journal article" date="2006" name="Genome Biol.">
        <title>Genomic analysis reveals that Pseudomonas aeruginosa virulence is combinatorial.</title>
        <authorList>
            <person name="Lee D.G."/>
            <person name="Urbach J.M."/>
            <person name="Wu G."/>
            <person name="Liberati N.T."/>
            <person name="Feinbaum R.L."/>
            <person name="Miyata S."/>
            <person name="Diggins L.T."/>
            <person name="He J."/>
            <person name="Saucier M."/>
            <person name="Deziel E."/>
            <person name="Friedman L."/>
            <person name="Li L."/>
            <person name="Grills G."/>
            <person name="Montgomery K."/>
            <person name="Kucherlapati R."/>
            <person name="Rahme L.G."/>
            <person name="Ausubel F.M."/>
        </authorList>
    </citation>
    <scope>NUCLEOTIDE SEQUENCE [LARGE SCALE GENOMIC DNA]</scope>
    <source>
        <strain>UCBPP-PA14</strain>
    </source>
</reference>
<comment type="function">
    <text evidence="1">Presumably involved in the processing and regular turnover of intracellular proteins. Catalyzes the removal of unsubstituted N-terminal amino acids from various peptides.</text>
</comment>
<comment type="catalytic activity">
    <reaction evidence="1">
        <text>Release of an N-terminal amino acid, Xaa-|-Yaa-, in which Xaa is preferably Leu, but may be other amino acids including Pro although not Arg or Lys, and Yaa may be Pro. Amino acid amides and methyl esters are also readily hydrolyzed, but rates on arylamides are exceedingly low.</text>
        <dbReference type="EC" id="3.4.11.1"/>
    </reaction>
</comment>
<comment type="catalytic activity">
    <reaction evidence="1">
        <text>Release of an N-terminal amino acid, preferentially leucine, but not glutamic or aspartic acids.</text>
        <dbReference type="EC" id="3.4.11.10"/>
    </reaction>
</comment>
<comment type="cofactor">
    <cofactor evidence="1">
        <name>Mn(2+)</name>
        <dbReference type="ChEBI" id="CHEBI:29035"/>
    </cofactor>
    <text evidence="1">Binds 2 manganese ions per subunit.</text>
</comment>
<comment type="subcellular location">
    <subcellularLocation>
        <location evidence="1">Cytoplasm</location>
    </subcellularLocation>
</comment>
<comment type="similarity">
    <text evidence="1">Belongs to the peptidase M17 family.</text>
</comment>
<name>AMPA_PSEAB</name>
<dbReference type="EC" id="3.4.11.1" evidence="1"/>
<dbReference type="EC" id="3.4.11.10" evidence="1"/>
<dbReference type="EMBL" id="CP000438">
    <property type="protein sequence ID" value="ABJ13095.1"/>
    <property type="molecule type" value="Genomic_DNA"/>
</dbReference>
<dbReference type="RefSeq" id="WP_003137844.1">
    <property type="nucleotide sequence ID" value="NZ_CP034244.1"/>
</dbReference>
<dbReference type="PDB" id="8PZ0">
    <property type="method" value="X-ray"/>
    <property type="resolution" value="1.80 A"/>
    <property type="chains" value="A=1-495"/>
</dbReference>
<dbReference type="PDB" id="8PZM">
    <property type="method" value="X-ray"/>
    <property type="resolution" value="1.70 A"/>
    <property type="chains" value="A=1-495"/>
</dbReference>
<dbReference type="PDB" id="8PZY">
    <property type="method" value="X-ray"/>
    <property type="resolution" value="1.97 A"/>
    <property type="chains" value="A/B/C/D/E/F=1-495"/>
</dbReference>
<dbReference type="PDBsum" id="8PZ0"/>
<dbReference type="PDBsum" id="8PZM"/>
<dbReference type="PDBsum" id="8PZY"/>
<dbReference type="SMR" id="Q02RY8"/>
<dbReference type="MEROPS" id="M17.003"/>
<dbReference type="KEGG" id="pau:PA14_14470"/>
<dbReference type="PseudoCAP" id="PA14_14470"/>
<dbReference type="HOGENOM" id="CLU_013734_2_2_6"/>
<dbReference type="BioCyc" id="PAER208963:G1G74-1188-MONOMER"/>
<dbReference type="Proteomes" id="UP000000653">
    <property type="component" value="Chromosome"/>
</dbReference>
<dbReference type="GO" id="GO:0005737">
    <property type="term" value="C:cytoplasm"/>
    <property type="evidence" value="ECO:0007669"/>
    <property type="project" value="UniProtKB-SubCell"/>
</dbReference>
<dbReference type="GO" id="GO:0030145">
    <property type="term" value="F:manganese ion binding"/>
    <property type="evidence" value="ECO:0007669"/>
    <property type="project" value="UniProtKB-UniRule"/>
</dbReference>
<dbReference type="GO" id="GO:0070006">
    <property type="term" value="F:metalloaminopeptidase activity"/>
    <property type="evidence" value="ECO:0007669"/>
    <property type="project" value="InterPro"/>
</dbReference>
<dbReference type="GO" id="GO:0006508">
    <property type="term" value="P:proteolysis"/>
    <property type="evidence" value="ECO:0007669"/>
    <property type="project" value="UniProtKB-KW"/>
</dbReference>
<dbReference type="CDD" id="cd00433">
    <property type="entry name" value="Peptidase_M17"/>
    <property type="match status" value="1"/>
</dbReference>
<dbReference type="FunFam" id="3.40.630.10:FF:000004">
    <property type="entry name" value="Probable cytosol aminopeptidase"/>
    <property type="match status" value="1"/>
</dbReference>
<dbReference type="Gene3D" id="3.40.220.10">
    <property type="entry name" value="Leucine Aminopeptidase, subunit E, domain 1"/>
    <property type="match status" value="1"/>
</dbReference>
<dbReference type="Gene3D" id="3.40.630.10">
    <property type="entry name" value="Zn peptidases"/>
    <property type="match status" value="1"/>
</dbReference>
<dbReference type="HAMAP" id="MF_00181">
    <property type="entry name" value="Cytosol_peptidase_M17"/>
    <property type="match status" value="1"/>
</dbReference>
<dbReference type="InterPro" id="IPR011356">
    <property type="entry name" value="Leucine_aapep/pepB"/>
</dbReference>
<dbReference type="InterPro" id="IPR043472">
    <property type="entry name" value="Macro_dom-like"/>
</dbReference>
<dbReference type="InterPro" id="IPR000819">
    <property type="entry name" value="Peptidase_M17_C"/>
</dbReference>
<dbReference type="InterPro" id="IPR023042">
    <property type="entry name" value="Peptidase_M17_leu_NH2_pept"/>
</dbReference>
<dbReference type="InterPro" id="IPR008283">
    <property type="entry name" value="Peptidase_M17_N"/>
</dbReference>
<dbReference type="NCBIfam" id="NF002073">
    <property type="entry name" value="PRK00913.1-2"/>
    <property type="match status" value="1"/>
</dbReference>
<dbReference type="NCBIfam" id="NF002074">
    <property type="entry name" value="PRK00913.1-4"/>
    <property type="match status" value="1"/>
</dbReference>
<dbReference type="NCBIfam" id="NF002077">
    <property type="entry name" value="PRK00913.2-4"/>
    <property type="match status" value="1"/>
</dbReference>
<dbReference type="PANTHER" id="PTHR11963:SF23">
    <property type="entry name" value="CYTOSOL AMINOPEPTIDASE"/>
    <property type="match status" value="1"/>
</dbReference>
<dbReference type="PANTHER" id="PTHR11963">
    <property type="entry name" value="LEUCINE AMINOPEPTIDASE-RELATED"/>
    <property type="match status" value="1"/>
</dbReference>
<dbReference type="Pfam" id="PF00883">
    <property type="entry name" value="Peptidase_M17"/>
    <property type="match status" value="1"/>
</dbReference>
<dbReference type="Pfam" id="PF02789">
    <property type="entry name" value="Peptidase_M17_N"/>
    <property type="match status" value="1"/>
</dbReference>
<dbReference type="PRINTS" id="PR00481">
    <property type="entry name" value="LAMNOPPTDASE"/>
</dbReference>
<dbReference type="SUPFAM" id="SSF52949">
    <property type="entry name" value="Macro domain-like"/>
    <property type="match status" value="1"/>
</dbReference>
<dbReference type="SUPFAM" id="SSF53187">
    <property type="entry name" value="Zn-dependent exopeptidases"/>
    <property type="match status" value="1"/>
</dbReference>
<dbReference type="PROSITE" id="PS00631">
    <property type="entry name" value="CYTOSOL_AP"/>
    <property type="match status" value="1"/>
</dbReference>
<protein>
    <recommendedName>
        <fullName evidence="1">Probable cytosol aminopeptidase</fullName>
        <ecNumber evidence="1">3.4.11.1</ecNumber>
    </recommendedName>
    <alternativeName>
        <fullName evidence="1">Leucine aminopeptidase</fullName>
        <shortName evidence="1">LAP</shortName>
        <ecNumber evidence="1">3.4.11.10</ecNumber>
    </alternativeName>
    <alternativeName>
        <fullName evidence="1">Leucyl aminopeptidase</fullName>
    </alternativeName>
</protein>
<organism>
    <name type="scientific">Pseudomonas aeruginosa (strain UCBPP-PA14)</name>
    <dbReference type="NCBI Taxonomy" id="208963"/>
    <lineage>
        <taxon>Bacteria</taxon>
        <taxon>Pseudomonadati</taxon>
        <taxon>Pseudomonadota</taxon>
        <taxon>Gammaproteobacteria</taxon>
        <taxon>Pseudomonadales</taxon>
        <taxon>Pseudomonadaceae</taxon>
        <taxon>Pseudomonas</taxon>
    </lineage>
</organism>
<accession>Q02RY8</accession>